<protein>
    <recommendedName>
        <fullName evidence="2">Potassium-transporting ATPase ATP-binding subunit</fullName>
        <ecNumber evidence="2">7.2.2.6</ecNumber>
    </recommendedName>
    <alternativeName>
        <fullName evidence="2">ATP phosphohydrolase [potassium-transporting] B chain</fullName>
    </alternativeName>
    <alternativeName>
        <fullName evidence="2">Potassium-binding and translocating subunit B</fullName>
    </alternativeName>
    <alternativeName>
        <fullName evidence="2">Potassium-translocating ATPase B chain</fullName>
    </alternativeName>
</protein>
<sequence>MAEITVTIDTDQQKQAISDSFAKLDPQYLVKNPVLFVVELGTIIGLVMTIAPGLFGATGSRVYYAVITVLLGFTVIFANYAEAYAELEGEAQADSLRALQTEAEGKLLQNDDVDIEDISEDDYEVVASTEIEQDAVVFVDEGDIIPRDGTVVEGSASVDESAITGESEPVIRQSGGDRTSVVGGTEVLSDRIKVEVTSEEGESFLDQMIGLVEDAQRQKTPNEIAMTILLSGLTLVFVVAVATMFFFGEYLASFVGGFAGLDVAELVALLVALMPTTIGALLAAIRVAGMTRVTRRNVIAKSGRAVEAAGDLDALILDKTGTITTGERVAQDFHPLGDADDADVVRASYQSSLYDETTEGRSIVKLAEKMNGKVQTDGGQSASEELDEPGDSVDAPRDVSVTLDAEGLSESNFVPFSAETRMSGIDLSDGTEIRKGAVDAVEEYATTVPGKLRQKSNAISESGGTPLAIAVDGQVVGIIELQDELKPGIADRIAEIQKMGVETIMATGDNQRTARWVADQVGIDEFHAEFDPEEKIELVEDIQDDGKLVGMTGDGTNDAPALAKADVGLAMNAGTNAAKEAGNMVDLDSNPSKIIEVVGIGKQLLMTRGSLTTFSVANDVAKYFVLLPAILAAAIPGLGAMDILNLSTPASAVTATLMYNAFIIPLLIPLALRGVDYKAQSGAQLLRKNLIVYGGGGLIAPFIFIKAIDMLFVALGVFQ</sequence>
<feature type="chain" id="PRO_0000433790" description="Potassium-transporting ATPase ATP-binding subunit">
    <location>
        <begin position="1"/>
        <end position="719"/>
    </location>
</feature>
<feature type="transmembrane region" description="Helical" evidence="2">
    <location>
        <begin position="35"/>
        <end position="55"/>
    </location>
</feature>
<feature type="transmembrane region" description="Helical" evidence="2">
    <location>
        <begin position="62"/>
        <end position="82"/>
    </location>
</feature>
<feature type="transmembrane region" description="Helical" evidence="2">
    <location>
        <begin position="228"/>
        <end position="248"/>
    </location>
</feature>
<feature type="transmembrane region" description="Helical" evidence="2">
    <location>
        <begin position="254"/>
        <end position="274"/>
    </location>
</feature>
<feature type="transmembrane region" description="Helical" evidence="2">
    <location>
        <begin position="624"/>
        <end position="644"/>
    </location>
</feature>
<feature type="transmembrane region" description="Helical" evidence="2">
    <location>
        <begin position="652"/>
        <end position="672"/>
    </location>
</feature>
<feature type="transmembrane region" description="Helical" evidence="2">
    <location>
        <begin position="698"/>
        <end position="718"/>
    </location>
</feature>
<feature type="region of interest" description="Disordered" evidence="3">
    <location>
        <begin position="372"/>
        <end position="396"/>
    </location>
</feature>
<feature type="compositionally biased region" description="Polar residues" evidence="3">
    <location>
        <begin position="373"/>
        <end position="383"/>
    </location>
</feature>
<feature type="active site" description="4-aspartylphosphate intermediate" evidence="2">
    <location>
        <position position="318"/>
    </location>
</feature>
<feature type="binding site" evidence="2">
    <location>
        <position position="355"/>
    </location>
    <ligand>
        <name>ATP</name>
        <dbReference type="ChEBI" id="CHEBI:30616"/>
    </ligand>
</feature>
<feature type="binding site" evidence="2">
    <location>
        <position position="359"/>
    </location>
    <ligand>
        <name>ATP</name>
        <dbReference type="ChEBI" id="CHEBI:30616"/>
    </ligand>
</feature>
<feature type="binding site" evidence="2">
    <location>
        <begin position="416"/>
        <end position="423"/>
    </location>
    <ligand>
        <name>ATP</name>
        <dbReference type="ChEBI" id="CHEBI:30616"/>
    </ligand>
</feature>
<feature type="binding site" evidence="2">
    <location>
        <position position="435"/>
    </location>
    <ligand>
        <name>ATP</name>
        <dbReference type="ChEBI" id="CHEBI:30616"/>
    </ligand>
</feature>
<feature type="binding site" evidence="2">
    <location>
        <position position="554"/>
    </location>
    <ligand>
        <name>Mg(2+)</name>
        <dbReference type="ChEBI" id="CHEBI:18420"/>
    </ligand>
</feature>
<feature type="binding site" evidence="2">
    <location>
        <position position="558"/>
    </location>
    <ligand>
        <name>Mg(2+)</name>
        <dbReference type="ChEBI" id="CHEBI:18420"/>
    </ligand>
</feature>
<gene>
    <name evidence="2 7" type="primary">kdpB</name>
    <name evidence="7" type="ordered locus">OE_5053F</name>
</gene>
<dbReference type="EC" id="7.2.2.6" evidence="2"/>
<dbReference type="EMBL" id="AM774418">
    <property type="protein sequence ID" value="CAP15447.1"/>
    <property type="molecule type" value="Genomic_DNA"/>
</dbReference>
<dbReference type="RefSeq" id="WP_010904057.1">
    <property type="nucleotide sequence ID" value="NC_010368.1"/>
</dbReference>
<dbReference type="SMR" id="B0R9M0"/>
<dbReference type="EnsemblBacteria" id="CAP15447">
    <property type="protein sequence ID" value="CAP15447"/>
    <property type="gene ID" value="OE_5053F"/>
</dbReference>
<dbReference type="GeneID" id="68695375"/>
<dbReference type="KEGG" id="hsl:OE_5053F"/>
<dbReference type="HOGENOM" id="CLU_025728_2_0_2"/>
<dbReference type="PhylomeDB" id="B0R9M0"/>
<dbReference type="Proteomes" id="UP000001321">
    <property type="component" value="Plasmid PHS3"/>
</dbReference>
<dbReference type="GO" id="GO:0005886">
    <property type="term" value="C:plasma membrane"/>
    <property type="evidence" value="ECO:0007669"/>
    <property type="project" value="UniProtKB-SubCell"/>
</dbReference>
<dbReference type="GO" id="GO:0005524">
    <property type="term" value="F:ATP binding"/>
    <property type="evidence" value="ECO:0007669"/>
    <property type="project" value="UniProtKB-UniRule"/>
</dbReference>
<dbReference type="GO" id="GO:0016887">
    <property type="term" value="F:ATP hydrolysis activity"/>
    <property type="evidence" value="ECO:0007669"/>
    <property type="project" value="InterPro"/>
</dbReference>
<dbReference type="GO" id="GO:0000287">
    <property type="term" value="F:magnesium ion binding"/>
    <property type="evidence" value="ECO:0007669"/>
    <property type="project" value="UniProtKB-UniRule"/>
</dbReference>
<dbReference type="GO" id="GO:0008556">
    <property type="term" value="F:P-type potassium transmembrane transporter activity"/>
    <property type="evidence" value="ECO:0007669"/>
    <property type="project" value="UniProtKB-UniRule"/>
</dbReference>
<dbReference type="CDD" id="cd02078">
    <property type="entry name" value="P-type_ATPase_K"/>
    <property type="match status" value="1"/>
</dbReference>
<dbReference type="FunFam" id="2.70.150.10:FF:000010">
    <property type="entry name" value="Potassium-transporting ATPase ATP-binding subunit"/>
    <property type="match status" value="1"/>
</dbReference>
<dbReference type="Gene3D" id="3.40.1110.10">
    <property type="entry name" value="Calcium-transporting ATPase, cytoplasmic domain N"/>
    <property type="match status" value="1"/>
</dbReference>
<dbReference type="Gene3D" id="2.70.150.10">
    <property type="entry name" value="Calcium-transporting ATPase, cytoplasmic transduction domain A"/>
    <property type="match status" value="1"/>
</dbReference>
<dbReference type="Gene3D" id="3.40.50.1000">
    <property type="entry name" value="HAD superfamily/HAD-like"/>
    <property type="match status" value="1"/>
</dbReference>
<dbReference type="HAMAP" id="MF_00285">
    <property type="entry name" value="KdpB"/>
    <property type="match status" value="1"/>
</dbReference>
<dbReference type="InterPro" id="IPR023299">
    <property type="entry name" value="ATPase_P-typ_cyto_dom_N"/>
</dbReference>
<dbReference type="InterPro" id="IPR018303">
    <property type="entry name" value="ATPase_P-typ_P_site"/>
</dbReference>
<dbReference type="InterPro" id="IPR023298">
    <property type="entry name" value="ATPase_P-typ_TM_dom_sf"/>
</dbReference>
<dbReference type="InterPro" id="IPR008250">
    <property type="entry name" value="ATPase_P-typ_transduc_dom_A_sf"/>
</dbReference>
<dbReference type="InterPro" id="IPR036412">
    <property type="entry name" value="HAD-like_sf"/>
</dbReference>
<dbReference type="InterPro" id="IPR023214">
    <property type="entry name" value="HAD_sf"/>
</dbReference>
<dbReference type="InterPro" id="IPR006391">
    <property type="entry name" value="P-type_ATPase_bsu_IA"/>
</dbReference>
<dbReference type="InterPro" id="IPR001757">
    <property type="entry name" value="P_typ_ATPase"/>
</dbReference>
<dbReference type="InterPro" id="IPR044492">
    <property type="entry name" value="P_typ_ATPase_HD_dom"/>
</dbReference>
<dbReference type="NCBIfam" id="TIGR01494">
    <property type="entry name" value="ATPase_P-type"/>
    <property type="match status" value="2"/>
</dbReference>
<dbReference type="PANTHER" id="PTHR43743">
    <property type="entry name" value="POTASSIUM-TRANSPORTING ATPASE ATP-BINDING SUBUNIT"/>
    <property type="match status" value="1"/>
</dbReference>
<dbReference type="PANTHER" id="PTHR43743:SF1">
    <property type="entry name" value="POTASSIUM-TRANSPORTING ATPASE ATP-BINDING SUBUNIT"/>
    <property type="match status" value="1"/>
</dbReference>
<dbReference type="Pfam" id="PF00122">
    <property type="entry name" value="E1-E2_ATPase"/>
    <property type="match status" value="1"/>
</dbReference>
<dbReference type="Pfam" id="PF00702">
    <property type="entry name" value="Hydrolase"/>
    <property type="match status" value="1"/>
</dbReference>
<dbReference type="PRINTS" id="PR00119">
    <property type="entry name" value="CATATPASE"/>
</dbReference>
<dbReference type="SFLD" id="SFLDS00003">
    <property type="entry name" value="Haloacid_Dehalogenase"/>
    <property type="match status" value="1"/>
</dbReference>
<dbReference type="SFLD" id="SFLDF00027">
    <property type="entry name" value="p-type_atpase"/>
    <property type="match status" value="1"/>
</dbReference>
<dbReference type="SUPFAM" id="SSF81653">
    <property type="entry name" value="Calcium ATPase, transduction domain A"/>
    <property type="match status" value="1"/>
</dbReference>
<dbReference type="SUPFAM" id="SSF81665">
    <property type="entry name" value="Calcium ATPase, transmembrane domain M"/>
    <property type="match status" value="1"/>
</dbReference>
<dbReference type="SUPFAM" id="SSF56784">
    <property type="entry name" value="HAD-like"/>
    <property type="match status" value="1"/>
</dbReference>
<dbReference type="SUPFAM" id="SSF81660">
    <property type="entry name" value="Metal cation-transporting ATPase, ATP-binding domain N"/>
    <property type="match status" value="1"/>
</dbReference>
<dbReference type="PROSITE" id="PS00154">
    <property type="entry name" value="ATPASE_E1_E2"/>
    <property type="match status" value="1"/>
</dbReference>
<evidence type="ECO:0000250" key="1">
    <source>
        <dbReference type="UniProtKB" id="P03960"/>
    </source>
</evidence>
<evidence type="ECO:0000255" key="2">
    <source>
        <dbReference type="HAMAP-Rule" id="MF_00285"/>
    </source>
</evidence>
<evidence type="ECO:0000256" key="3">
    <source>
        <dbReference type="SAM" id="MobiDB-lite"/>
    </source>
</evidence>
<evidence type="ECO:0000269" key="4">
    <source>
    </source>
</evidence>
<evidence type="ECO:0000269" key="5">
    <source>
    </source>
</evidence>
<evidence type="ECO:0000269" key="6">
    <source>
    </source>
</evidence>
<evidence type="ECO:0000312" key="7">
    <source>
        <dbReference type="EMBL" id="CAP15447.1"/>
    </source>
</evidence>
<keyword id="KW-0067">ATP-binding</keyword>
<keyword id="KW-1003">Cell membrane</keyword>
<keyword id="KW-0406">Ion transport</keyword>
<keyword id="KW-0460">Magnesium</keyword>
<keyword id="KW-0472">Membrane</keyword>
<keyword id="KW-0479">Metal-binding</keyword>
<keyword id="KW-0547">Nucleotide-binding</keyword>
<keyword id="KW-0597">Phosphoprotein</keyword>
<keyword id="KW-0614">Plasmid</keyword>
<keyword id="KW-0630">Potassium</keyword>
<keyword id="KW-0633">Potassium transport</keyword>
<keyword id="KW-1278">Translocase</keyword>
<keyword id="KW-0812">Transmembrane</keyword>
<keyword id="KW-1133">Transmembrane helix</keyword>
<keyword id="KW-0813">Transport</keyword>
<reference key="1">
    <citation type="journal article" date="2008" name="Genomics">
        <title>Evolution in the laboratory: the genome of Halobacterium salinarum strain R1 compared to that of strain NRC-1.</title>
        <authorList>
            <person name="Pfeiffer F."/>
            <person name="Schuster S.C."/>
            <person name="Broicher A."/>
            <person name="Falb M."/>
            <person name="Palm P."/>
            <person name="Rodewald K."/>
            <person name="Ruepp A."/>
            <person name="Soppa J."/>
            <person name="Tittor J."/>
            <person name="Oesterhelt D."/>
        </authorList>
    </citation>
    <scope>NUCLEOTIDE SEQUENCE [LARGE SCALE GENOMIC DNA]</scope>
    <source>
        <strain>ATCC 29341 / DSM 671 / R1</strain>
    </source>
</reference>
<reference key="2">
    <citation type="journal article" date="2008" name="Extremophiles">
        <title>The extremely halophilic archaeon Halobacterium salinarum R1 responds to potassium limitation by expression of the K+-transporting KdpFABC P-type ATPase and by a decrease in intracellular K+.</title>
        <authorList>
            <person name="Strahl H."/>
            <person name="Greie J.C."/>
        </authorList>
    </citation>
    <scope>FUNCTION</scope>
    <scope>INDUCTION</scope>
    <scope>DISRUPTION PHENOTYPE</scope>
    <source>
        <strain>ATCC 29341 / DSM 671 / R1</strain>
    </source>
</reference>
<reference key="3">
    <citation type="journal article" date="2011" name="Extremophiles">
        <title>Archaeal transcriptional regulation of the prokaryotic KdpFABC complex mediating K(+) uptake in H. salinarum.</title>
        <authorList>
            <person name="Kixmueller D."/>
            <person name="Strahl H."/>
            <person name="Wende A."/>
            <person name="Greie J.C."/>
        </authorList>
    </citation>
    <scope>INDUCTION</scope>
    <source>
        <strain>ATCC 29341 / DSM 671 / R1</strain>
    </source>
</reference>
<reference key="4">
    <citation type="journal article" date="2012" name="Environ. Microbiol. Rep.">
        <title>An ATP-driven potassium pump promotes long-term survival of Halobacterium salinarum within salt crystals.</title>
        <authorList>
            <person name="Kixmueller D."/>
            <person name="Greie J.C."/>
        </authorList>
    </citation>
    <scope>FUNCTION</scope>
    <scope>INDUCTION</scope>
    <source>
        <strain>ATCC 29341 / DSM 671 / R1</strain>
    </source>
</reference>
<name>KDPB_HALS3</name>
<organism>
    <name type="scientific">Halobacterium salinarum (strain ATCC 29341 / DSM 671 / R1)</name>
    <dbReference type="NCBI Taxonomy" id="478009"/>
    <lineage>
        <taxon>Archaea</taxon>
        <taxon>Methanobacteriati</taxon>
        <taxon>Methanobacteriota</taxon>
        <taxon>Stenosarchaea group</taxon>
        <taxon>Halobacteria</taxon>
        <taxon>Halobacteriales</taxon>
        <taxon>Halobacteriaceae</taxon>
        <taxon>Halobacterium</taxon>
        <taxon>Halobacterium salinarum NRC-34001</taxon>
    </lineage>
</organism>
<comment type="function">
    <text evidence="2 4 6">Part of the high-affinity ATP-driven potassium transport (or Kdp) system, which catalyzes the hydrolysis of ATP coupled with the electrogenic transport of potassium into the cytoplasm. This subunit is responsible for energy coupling to the transport system and for the release of the potassium ions to the cytoplasm (By similarity). The Kdp system is essential for growth under K(+) limitation, and for survival under desiccation and salt crystal inclusion (PubMed:18633573, PubMed:23757278).</text>
</comment>
<comment type="catalytic activity">
    <reaction evidence="2">
        <text>K(+)(out) + ATP + H2O = K(+)(in) + ADP + phosphate + H(+)</text>
        <dbReference type="Rhea" id="RHEA:16777"/>
        <dbReference type="ChEBI" id="CHEBI:15377"/>
        <dbReference type="ChEBI" id="CHEBI:15378"/>
        <dbReference type="ChEBI" id="CHEBI:29103"/>
        <dbReference type="ChEBI" id="CHEBI:30616"/>
        <dbReference type="ChEBI" id="CHEBI:43474"/>
        <dbReference type="ChEBI" id="CHEBI:456216"/>
        <dbReference type="EC" id="7.2.2.6"/>
    </reaction>
    <physiologicalReaction direction="left-to-right" evidence="2">
        <dbReference type="Rhea" id="RHEA:16778"/>
    </physiologicalReaction>
</comment>
<comment type="subunit">
    <text evidence="1">The system is composed of three essential subunits: KdpA, KdpB and KdpC. The complex also contains KdpF, a small non-essential subunit.</text>
</comment>
<comment type="subcellular location">
    <subcellularLocation>
        <location evidence="2">Cell membrane</location>
        <topology evidence="2">Multi-pass membrane protein</topology>
    </subcellularLocation>
</comment>
<comment type="induction">
    <text evidence="4 5 6">Up-regulated in response to K(+) limitation (PubMed:18633573, PubMed:21947979). Induced under desiccating conditions (PubMed:23757278).</text>
</comment>
<comment type="disruption phenotype">
    <text evidence="4">kdpFABCQ and kdpFABC deletion strains are only able to grow in the presence of K(+) concentrations above 60 uM.</text>
</comment>
<comment type="similarity">
    <text evidence="2">Belongs to the cation transport ATPase (P-type) (TC 3.A.3) family. Type IA subfamily.</text>
</comment>
<accession>B0R9M0</accession>
<proteinExistence type="evidence at transcript level"/>
<geneLocation type="plasmid" evidence="7">
    <name>PHS3</name>
</geneLocation>